<sequence>MLAKRIIPCLDVRDGQVVKGVQFRNHEIIGDIVPLAKRYADEGADELVFYDITASSDGRVVDKSWVARVAEVIDIPFCVAGGIRSIDDAAKILSFGADKISINSPALADPTLITRLADRFGVQCIVVGIDTWFDDATGKYHVNQYTGDENRTRVTQWETLDWVQEVQQRGAGEIVLNMMNQDGVRNGYDLTQLKKVRDVCRVPLIASGGAGTMEHFLEAFRDADVDGALAASVFHKQIINIGELKAYLAGQGVEIRIC</sequence>
<protein>
    <recommendedName>
        <fullName evidence="1">Imidazole glycerol phosphate synthase subunit HisF</fullName>
        <ecNumber evidence="1">4.3.2.10</ecNumber>
    </recommendedName>
    <alternativeName>
        <fullName evidence="1">IGP synthase cyclase subunit</fullName>
    </alternativeName>
    <alternativeName>
        <fullName evidence="1">IGP synthase subunit HisF</fullName>
    </alternativeName>
    <alternativeName>
        <fullName evidence="1">ImGP synthase subunit HisF</fullName>
        <shortName evidence="1">IGPS subunit HisF</shortName>
    </alternativeName>
</protein>
<feature type="chain" id="PRO_1000190600" description="Imidazole glycerol phosphate synthase subunit HisF">
    <location>
        <begin position="1"/>
        <end position="258"/>
    </location>
</feature>
<feature type="active site" evidence="1">
    <location>
        <position position="11"/>
    </location>
</feature>
<feature type="active site" evidence="1">
    <location>
        <position position="130"/>
    </location>
</feature>
<name>HIS6_SALEP</name>
<dbReference type="EC" id="4.3.2.10" evidence="1"/>
<dbReference type="EMBL" id="AM933172">
    <property type="protein sequence ID" value="CAR33655.1"/>
    <property type="molecule type" value="Genomic_DNA"/>
</dbReference>
<dbReference type="RefSeq" id="WP_000880125.1">
    <property type="nucleotide sequence ID" value="NC_011294.1"/>
</dbReference>
<dbReference type="SMR" id="B5QZL7"/>
<dbReference type="KEGG" id="set:SEN2076"/>
<dbReference type="HOGENOM" id="CLU_048577_4_0_6"/>
<dbReference type="UniPathway" id="UPA00031">
    <property type="reaction ID" value="UER00010"/>
</dbReference>
<dbReference type="Proteomes" id="UP000000613">
    <property type="component" value="Chromosome"/>
</dbReference>
<dbReference type="GO" id="GO:0005737">
    <property type="term" value="C:cytoplasm"/>
    <property type="evidence" value="ECO:0007669"/>
    <property type="project" value="UniProtKB-SubCell"/>
</dbReference>
<dbReference type="GO" id="GO:0000107">
    <property type="term" value="F:imidazoleglycerol-phosphate synthase activity"/>
    <property type="evidence" value="ECO:0007669"/>
    <property type="project" value="UniProtKB-UniRule"/>
</dbReference>
<dbReference type="GO" id="GO:0016829">
    <property type="term" value="F:lyase activity"/>
    <property type="evidence" value="ECO:0007669"/>
    <property type="project" value="UniProtKB-KW"/>
</dbReference>
<dbReference type="GO" id="GO:0000105">
    <property type="term" value="P:L-histidine biosynthetic process"/>
    <property type="evidence" value="ECO:0007669"/>
    <property type="project" value="UniProtKB-UniRule"/>
</dbReference>
<dbReference type="CDD" id="cd04731">
    <property type="entry name" value="HisF"/>
    <property type="match status" value="1"/>
</dbReference>
<dbReference type="FunFam" id="3.20.20.70:FF:000006">
    <property type="entry name" value="Imidazole glycerol phosphate synthase subunit HisF"/>
    <property type="match status" value="1"/>
</dbReference>
<dbReference type="Gene3D" id="3.20.20.70">
    <property type="entry name" value="Aldolase class I"/>
    <property type="match status" value="1"/>
</dbReference>
<dbReference type="HAMAP" id="MF_01013">
    <property type="entry name" value="HisF"/>
    <property type="match status" value="1"/>
</dbReference>
<dbReference type="InterPro" id="IPR013785">
    <property type="entry name" value="Aldolase_TIM"/>
</dbReference>
<dbReference type="InterPro" id="IPR006062">
    <property type="entry name" value="His_biosynth"/>
</dbReference>
<dbReference type="InterPro" id="IPR004651">
    <property type="entry name" value="HisF"/>
</dbReference>
<dbReference type="InterPro" id="IPR050064">
    <property type="entry name" value="IGPS_HisA/HisF"/>
</dbReference>
<dbReference type="InterPro" id="IPR011060">
    <property type="entry name" value="RibuloseP-bd_barrel"/>
</dbReference>
<dbReference type="NCBIfam" id="TIGR00735">
    <property type="entry name" value="hisF"/>
    <property type="match status" value="1"/>
</dbReference>
<dbReference type="PANTHER" id="PTHR21235:SF2">
    <property type="entry name" value="IMIDAZOLE GLYCEROL PHOSPHATE SYNTHASE HISHF"/>
    <property type="match status" value="1"/>
</dbReference>
<dbReference type="PANTHER" id="PTHR21235">
    <property type="entry name" value="IMIDAZOLE GLYCEROL PHOSPHATE SYNTHASE SUBUNIT HISF/H IGP SYNTHASE SUBUNIT HISF/H"/>
    <property type="match status" value="1"/>
</dbReference>
<dbReference type="Pfam" id="PF00977">
    <property type="entry name" value="His_biosynth"/>
    <property type="match status" value="1"/>
</dbReference>
<dbReference type="SUPFAM" id="SSF51366">
    <property type="entry name" value="Ribulose-phoshate binding barrel"/>
    <property type="match status" value="1"/>
</dbReference>
<proteinExistence type="inferred from homology"/>
<evidence type="ECO:0000255" key="1">
    <source>
        <dbReference type="HAMAP-Rule" id="MF_01013"/>
    </source>
</evidence>
<reference key="1">
    <citation type="journal article" date="2008" name="Genome Res.">
        <title>Comparative genome analysis of Salmonella enteritidis PT4 and Salmonella gallinarum 287/91 provides insights into evolutionary and host adaptation pathways.</title>
        <authorList>
            <person name="Thomson N.R."/>
            <person name="Clayton D.J."/>
            <person name="Windhorst D."/>
            <person name="Vernikos G."/>
            <person name="Davidson S."/>
            <person name="Churcher C."/>
            <person name="Quail M.A."/>
            <person name="Stevens M."/>
            <person name="Jones M.A."/>
            <person name="Watson M."/>
            <person name="Barron A."/>
            <person name="Layton A."/>
            <person name="Pickard D."/>
            <person name="Kingsley R.A."/>
            <person name="Bignell A."/>
            <person name="Clark L."/>
            <person name="Harris B."/>
            <person name="Ormond D."/>
            <person name="Abdellah Z."/>
            <person name="Brooks K."/>
            <person name="Cherevach I."/>
            <person name="Chillingworth T."/>
            <person name="Woodward J."/>
            <person name="Norberczak H."/>
            <person name="Lord A."/>
            <person name="Arrowsmith C."/>
            <person name="Jagels K."/>
            <person name="Moule S."/>
            <person name="Mungall K."/>
            <person name="Saunders M."/>
            <person name="Whitehead S."/>
            <person name="Chabalgoity J.A."/>
            <person name="Maskell D."/>
            <person name="Humphreys T."/>
            <person name="Roberts M."/>
            <person name="Barrow P.A."/>
            <person name="Dougan G."/>
            <person name="Parkhill J."/>
        </authorList>
    </citation>
    <scope>NUCLEOTIDE SEQUENCE [LARGE SCALE GENOMIC DNA]</scope>
    <source>
        <strain>P125109</strain>
    </source>
</reference>
<gene>
    <name evidence="1" type="primary">hisF</name>
    <name type="ordered locus">SEN2076</name>
</gene>
<keyword id="KW-0028">Amino-acid biosynthesis</keyword>
<keyword id="KW-0963">Cytoplasm</keyword>
<keyword id="KW-0368">Histidine biosynthesis</keyword>
<keyword id="KW-0456">Lyase</keyword>
<accession>B5QZL7</accession>
<organism>
    <name type="scientific">Salmonella enteritidis PT4 (strain P125109)</name>
    <dbReference type="NCBI Taxonomy" id="550537"/>
    <lineage>
        <taxon>Bacteria</taxon>
        <taxon>Pseudomonadati</taxon>
        <taxon>Pseudomonadota</taxon>
        <taxon>Gammaproteobacteria</taxon>
        <taxon>Enterobacterales</taxon>
        <taxon>Enterobacteriaceae</taxon>
        <taxon>Salmonella</taxon>
    </lineage>
</organism>
<comment type="function">
    <text evidence="1">IGPS catalyzes the conversion of PRFAR and glutamine to IGP, AICAR and glutamate. The HisF subunit catalyzes the cyclization activity that produces IGP and AICAR from PRFAR using the ammonia provided by the HisH subunit.</text>
</comment>
<comment type="catalytic activity">
    <reaction evidence="1">
        <text>5-[(5-phospho-1-deoxy-D-ribulos-1-ylimino)methylamino]-1-(5-phospho-beta-D-ribosyl)imidazole-4-carboxamide + L-glutamine = D-erythro-1-(imidazol-4-yl)glycerol 3-phosphate + 5-amino-1-(5-phospho-beta-D-ribosyl)imidazole-4-carboxamide + L-glutamate + H(+)</text>
        <dbReference type="Rhea" id="RHEA:24793"/>
        <dbReference type="ChEBI" id="CHEBI:15378"/>
        <dbReference type="ChEBI" id="CHEBI:29985"/>
        <dbReference type="ChEBI" id="CHEBI:58278"/>
        <dbReference type="ChEBI" id="CHEBI:58359"/>
        <dbReference type="ChEBI" id="CHEBI:58475"/>
        <dbReference type="ChEBI" id="CHEBI:58525"/>
        <dbReference type="EC" id="4.3.2.10"/>
    </reaction>
</comment>
<comment type="pathway">
    <text evidence="1">Amino-acid biosynthesis; L-histidine biosynthesis; L-histidine from 5-phospho-alpha-D-ribose 1-diphosphate: step 5/9.</text>
</comment>
<comment type="subunit">
    <text evidence="1">Heterodimer of HisH and HisF.</text>
</comment>
<comment type="subcellular location">
    <subcellularLocation>
        <location evidence="1">Cytoplasm</location>
    </subcellularLocation>
</comment>
<comment type="similarity">
    <text evidence="1">Belongs to the HisA/HisF family.</text>
</comment>